<dbReference type="EMBL" id="CP000038">
    <property type="protein sequence ID" value="AAZ90023.1"/>
    <property type="molecule type" value="Genomic_DNA"/>
</dbReference>
<dbReference type="RefSeq" id="WP_000579825.1">
    <property type="nucleotide sequence ID" value="NC_007384.1"/>
</dbReference>
<dbReference type="SMR" id="Q3YWT9"/>
<dbReference type="KEGG" id="ssn:SSON_3461"/>
<dbReference type="HOGENOM" id="CLU_044142_4_1_6"/>
<dbReference type="Proteomes" id="UP000002529">
    <property type="component" value="Chromosome"/>
</dbReference>
<dbReference type="GO" id="GO:0022625">
    <property type="term" value="C:cytosolic large ribosomal subunit"/>
    <property type="evidence" value="ECO:0007669"/>
    <property type="project" value="TreeGrafter"/>
</dbReference>
<dbReference type="GO" id="GO:0019843">
    <property type="term" value="F:rRNA binding"/>
    <property type="evidence" value="ECO:0007669"/>
    <property type="project" value="UniProtKB-UniRule"/>
</dbReference>
<dbReference type="GO" id="GO:0003735">
    <property type="term" value="F:structural constituent of ribosome"/>
    <property type="evidence" value="ECO:0007669"/>
    <property type="project" value="InterPro"/>
</dbReference>
<dbReference type="GO" id="GO:0006412">
    <property type="term" value="P:translation"/>
    <property type="evidence" value="ECO:0007669"/>
    <property type="project" value="UniProtKB-UniRule"/>
</dbReference>
<dbReference type="FunFam" id="2.40.30.10:FF:000004">
    <property type="entry name" value="50S ribosomal protein L3"/>
    <property type="match status" value="1"/>
</dbReference>
<dbReference type="FunFam" id="3.30.160.810:FF:000001">
    <property type="entry name" value="50S ribosomal protein L3"/>
    <property type="match status" value="1"/>
</dbReference>
<dbReference type="Gene3D" id="3.30.160.810">
    <property type="match status" value="1"/>
</dbReference>
<dbReference type="Gene3D" id="2.40.30.10">
    <property type="entry name" value="Translation factors"/>
    <property type="match status" value="1"/>
</dbReference>
<dbReference type="HAMAP" id="MF_01325_B">
    <property type="entry name" value="Ribosomal_uL3_B"/>
    <property type="match status" value="1"/>
</dbReference>
<dbReference type="InterPro" id="IPR000597">
    <property type="entry name" value="Ribosomal_uL3"/>
</dbReference>
<dbReference type="InterPro" id="IPR019927">
    <property type="entry name" value="Ribosomal_uL3_bac/org-type"/>
</dbReference>
<dbReference type="InterPro" id="IPR019926">
    <property type="entry name" value="Ribosomal_uL3_CS"/>
</dbReference>
<dbReference type="InterPro" id="IPR009000">
    <property type="entry name" value="Transl_B-barrel_sf"/>
</dbReference>
<dbReference type="NCBIfam" id="TIGR03625">
    <property type="entry name" value="L3_bact"/>
    <property type="match status" value="1"/>
</dbReference>
<dbReference type="PANTHER" id="PTHR11229">
    <property type="entry name" value="50S RIBOSOMAL PROTEIN L3"/>
    <property type="match status" value="1"/>
</dbReference>
<dbReference type="PANTHER" id="PTHR11229:SF16">
    <property type="entry name" value="LARGE RIBOSOMAL SUBUNIT PROTEIN UL3C"/>
    <property type="match status" value="1"/>
</dbReference>
<dbReference type="Pfam" id="PF00297">
    <property type="entry name" value="Ribosomal_L3"/>
    <property type="match status" value="1"/>
</dbReference>
<dbReference type="SUPFAM" id="SSF50447">
    <property type="entry name" value="Translation proteins"/>
    <property type="match status" value="1"/>
</dbReference>
<dbReference type="PROSITE" id="PS00474">
    <property type="entry name" value="RIBOSOMAL_L3"/>
    <property type="match status" value="1"/>
</dbReference>
<accession>Q3YWT9</accession>
<gene>
    <name evidence="1" type="primary">rplC</name>
    <name type="ordered locus">SSON_3461</name>
</gene>
<sequence length="209" mass="22229">MIGLVGKKAGMTRIFTEDGVSIPVTVIEVEANRVTQVKDLANDGYRAIQVTTGAKKANRVTKPEAGHFAKAGVEAGRGLWEFRLAEGEEFTVGQSISVELFAEVKKVDVTGTSKGKGFAGTVKRWNFRTQDATHGNSLSHRVPGSIGQNQTPGKVFKGKKMAGQMGNERVTVQSLDVVRVDAERNLLLVKGAVPGATGSDLIVKPAVKA</sequence>
<reference key="1">
    <citation type="journal article" date="2005" name="Nucleic Acids Res.">
        <title>Genome dynamics and diversity of Shigella species, the etiologic agents of bacillary dysentery.</title>
        <authorList>
            <person name="Yang F."/>
            <person name="Yang J."/>
            <person name="Zhang X."/>
            <person name="Chen L."/>
            <person name="Jiang Y."/>
            <person name="Yan Y."/>
            <person name="Tang X."/>
            <person name="Wang J."/>
            <person name="Xiong Z."/>
            <person name="Dong J."/>
            <person name="Xue Y."/>
            <person name="Zhu Y."/>
            <person name="Xu X."/>
            <person name="Sun L."/>
            <person name="Chen S."/>
            <person name="Nie H."/>
            <person name="Peng J."/>
            <person name="Xu J."/>
            <person name="Wang Y."/>
            <person name="Yuan Z."/>
            <person name="Wen Y."/>
            <person name="Yao Z."/>
            <person name="Shen Y."/>
            <person name="Qiang B."/>
            <person name="Hou Y."/>
            <person name="Yu J."/>
            <person name="Jin Q."/>
        </authorList>
    </citation>
    <scope>NUCLEOTIDE SEQUENCE [LARGE SCALE GENOMIC DNA]</scope>
    <source>
        <strain>Ss046</strain>
    </source>
</reference>
<keyword id="KW-0488">Methylation</keyword>
<keyword id="KW-1185">Reference proteome</keyword>
<keyword id="KW-0687">Ribonucleoprotein</keyword>
<keyword id="KW-0689">Ribosomal protein</keyword>
<keyword id="KW-0694">RNA-binding</keyword>
<keyword id="KW-0699">rRNA-binding</keyword>
<proteinExistence type="inferred from homology"/>
<organism>
    <name type="scientific">Shigella sonnei (strain Ss046)</name>
    <dbReference type="NCBI Taxonomy" id="300269"/>
    <lineage>
        <taxon>Bacteria</taxon>
        <taxon>Pseudomonadati</taxon>
        <taxon>Pseudomonadota</taxon>
        <taxon>Gammaproteobacteria</taxon>
        <taxon>Enterobacterales</taxon>
        <taxon>Enterobacteriaceae</taxon>
        <taxon>Shigella</taxon>
    </lineage>
</organism>
<comment type="function">
    <text evidence="1">One of the primary rRNA binding proteins, it binds directly near the 3'-end of the 23S rRNA, where it nucleates assembly of the 50S subunit.</text>
</comment>
<comment type="subunit">
    <text evidence="1">Part of the 50S ribosomal subunit. Forms a cluster with proteins L14 and L19.</text>
</comment>
<comment type="PTM">
    <text evidence="1">Methylated by PrmB.</text>
</comment>
<comment type="similarity">
    <text evidence="1">Belongs to the universal ribosomal protein uL3 family.</text>
</comment>
<name>RL3_SHISS</name>
<protein>
    <recommendedName>
        <fullName evidence="1">Large ribosomal subunit protein uL3</fullName>
    </recommendedName>
    <alternativeName>
        <fullName evidence="3">50S ribosomal protein L3</fullName>
    </alternativeName>
</protein>
<feature type="chain" id="PRO_0000241411" description="Large ribosomal subunit protein uL3">
    <location>
        <begin position="1"/>
        <end position="209"/>
    </location>
</feature>
<feature type="region of interest" description="Disordered" evidence="2">
    <location>
        <begin position="133"/>
        <end position="152"/>
    </location>
</feature>
<feature type="modified residue" description="N5-methylglutamine" evidence="1">
    <location>
        <position position="150"/>
    </location>
</feature>
<evidence type="ECO:0000255" key="1">
    <source>
        <dbReference type="HAMAP-Rule" id="MF_01325"/>
    </source>
</evidence>
<evidence type="ECO:0000256" key="2">
    <source>
        <dbReference type="SAM" id="MobiDB-lite"/>
    </source>
</evidence>
<evidence type="ECO:0000305" key="3"/>